<evidence type="ECO:0000250" key="1">
    <source>
        <dbReference type="UniProtKB" id="P58389"/>
    </source>
</evidence>
<evidence type="ECO:0000250" key="2">
    <source>
        <dbReference type="UniProtKB" id="Q28717"/>
    </source>
</evidence>
<evidence type="ECO:0000256" key="3">
    <source>
        <dbReference type="SAM" id="MobiDB-lite"/>
    </source>
</evidence>
<evidence type="ECO:0000269" key="4">
    <source>
    </source>
</evidence>
<evidence type="ECO:0000269" key="5">
    <source>
    </source>
</evidence>
<evidence type="ECO:0000269" key="6">
    <source>
    </source>
</evidence>
<evidence type="ECO:0000269" key="7">
    <source>
    </source>
</evidence>
<evidence type="ECO:0000269" key="8">
    <source ref="6"/>
</evidence>
<evidence type="ECO:0000303" key="9">
    <source>
    </source>
</evidence>
<evidence type="ECO:0000303" key="10">
    <source>
    </source>
</evidence>
<evidence type="ECO:0000303" key="11">
    <source>
    </source>
</evidence>
<evidence type="ECO:0000303" key="12">
    <source ref="5"/>
</evidence>
<evidence type="ECO:0000303" key="13">
    <source ref="6"/>
</evidence>
<evidence type="ECO:0000305" key="14"/>
<evidence type="ECO:0000312" key="15">
    <source>
        <dbReference type="HGNC" id="HGNC:9308"/>
    </source>
</evidence>
<evidence type="ECO:0007744" key="16">
    <source>
        <dbReference type="PDB" id="2G62"/>
    </source>
</evidence>
<evidence type="ECO:0007744" key="17">
    <source>
        <dbReference type="PDB" id="2HV6"/>
    </source>
</evidence>
<evidence type="ECO:0007744" key="18">
    <source>
        <dbReference type="PDB" id="2HV7"/>
    </source>
</evidence>
<evidence type="ECO:0007744" key="19">
    <source>
        <dbReference type="PDB" id="2IXM"/>
    </source>
</evidence>
<evidence type="ECO:0007744" key="20">
    <source>
        <dbReference type="PDB" id="4NY3"/>
    </source>
</evidence>
<evidence type="ECO:0007744" key="21">
    <source>
    </source>
</evidence>
<evidence type="ECO:0007829" key="22">
    <source>
        <dbReference type="PDB" id="2IXM"/>
    </source>
</evidence>
<accession>Q15257</accession>
<accession>A2A347</accession>
<accession>A9IZU4</accession>
<accession>B4DXM4</accession>
<accession>Q15258</accession>
<accession>Q53GZ3</accession>
<accession>Q5TZQ2</accession>
<accession>Q9BUK1</accession>
<accession>Q9NNZ7</accession>
<accession>Q9NNZ8</accession>
<accession>Q9NNZ9</accession>
<organism>
    <name type="scientific">Homo sapiens</name>
    <name type="common">Human</name>
    <dbReference type="NCBI Taxonomy" id="9606"/>
    <lineage>
        <taxon>Eukaryota</taxon>
        <taxon>Metazoa</taxon>
        <taxon>Chordata</taxon>
        <taxon>Craniata</taxon>
        <taxon>Vertebrata</taxon>
        <taxon>Euteleostomi</taxon>
        <taxon>Mammalia</taxon>
        <taxon>Eutheria</taxon>
        <taxon>Euarchontoglires</taxon>
        <taxon>Primates</taxon>
        <taxon>Haplorrhini</taxon>
        <taxon>Catarrhini</taxon>
        <taxon>Hominidae</taxon>
        <taxon>Homo</taxon>
    </lineage>
</organism>
<feature type="initiator methionine" description="Removed" evidence="21">
    <location>
        <position position="1"/>
    </location>
</feature>
<feature type="chain" id="PRO_0000071524" description="Serine/threonine-protein phosphatase 2A activator">
    <location>
        <begin position="2"/>
        <end position="358"/>
    </location>
</feature>
<feature type="region of interest" description="Disordered" evidence="3">
    <location>
        <begin position="1"/>
        <end position="20"/>
    </location>
</feature>
<feature type="binding site" evidence="4 18">
    <location>
        <position position="183"/>
    </location>
    <ligand>
        <name>ATP</name>
        <dbReference type="ChEBI" id="CHEBI:30616"/>
    </ligand>
</feature>
<feature type="binding site" evidence="4 18">
    <location>
        <position position="188"/>
    </location>
    <ligand>
        <name>ATP</name>
        <dbReference type="ChEBI" id="CHEBI:30616"/>
    </ligand>
</feature>
<feature type="binding site" evidence="4 18">
    <location>
        <position position="189"/>
    </location>
    <ligand>
        <name>ATP</name>
        <dbReference type="ChEBI" id="CHEBI:30616"/>
    </ligand>
</feature>
<feature type="binding site" evidence="4 17">
    <location>
        <position position="243"/>
    </location>
    <ligand>
        <name>Mg(2+)</name>
        <dbReference type="ChEBI" id="CHEBI:18420"/>
    </ligand>
</feature>
<feature type="binding site" evidence="4 17">
    <location>
        <position position="249"/>
    </location>
    <ligand>
        <name>Mg(2+)</name>
        <dbReference type="ChEBI" id="CHEBI:18420"/>
    </ligand>
</feature>
<feature type="binding site" evidence="4 18">
    <location>
        <position position="339"/>
    </location>
    <ligand>
        <name>ATP</name>
        <dbReference type="ChEBI" id="CHEBI:30616"/>
    </ligand>
</feature>
<feature type="binding site" evidence="4 18">
    <location>
        <position position="342"/>
    </location>
    <ligand>
        <name>ATP</name>
        <dbReference type="ChEBI" id="CHEBI:30616"/>
    </ligand>
</feature>
<feature type="binding site" evidence="4 18">
    <location>
        <position position="343"/>
    </location>
    <ligand>
        <name>ATP</name>
        <dbReference type="ChEBI" id="CHEBI:30616"/>
    </ligand>
</feature>
<feature type="modified residue" description="N-acetylalanine" evidence="21">
    <location>
        <position position="2"/>
    </location>
</feature>
<feature type="splice variant" id="VSP_005122" description="In isoform 3." evidence="9">
    <location>
        <begin position="45"/>
        <end position="108"/>
    </location>
</feature>
<feature type="splice variant" id="VSP_005124" description="In isoform 4." evidence="14">
    <location>
        <begin position="73"/>
        <end position="149"/>
    </location>
</feature>
<feature type="splice variant" id="VSP_005123" description="In isoform 1." evidence="10 11 12 13">
    <location>
        <begin position="73"/>
        <end position="107"/>
    </location>
</feature>
<feature type="sequence variant" id="VAR_028101" description="In dbSNP:rs17481693.">
    <original>K</original>
    <variation>R</variation>
    <location>
        <position position="28"/>
    </location>
</feature>
<feature type="sequence variant" id="VAR_089150" description="In PARK25; likely pathogenic; decreases PP2A complex levels; impairs PP2A phosphatase activation." evidence="7">
    <original>A</original>
    <variation>D</variation>
    <location>
        <position position="171"/>
    </location>
</feature>
<feature type="sequence variant" id="VAR_028102" description="In dbSNP:rs4836639.">
    <original>R</original>
    <variation>Q</variation>
    <location>
        <position position="208"/>
    </location>
</feature>
<feature type="sequence variant" id="VAR_089151" description="In PARK25; likely pathogenic; decreases PP2A complex levels; impairs PP2A phosphatase activation." evidence="7">
    <original>M</original>
    <variation>R</variation>
    <location>
        <position position="298"/>
    </location>
</feature>
<feature type="sequence variant" id="VAR_028103" description="In dbSNP:rs2480452." evidence="8">
    <original>S</original>
    <variation>L</variation>
    <location>
        <position position="357"/>
    </location>
</feature>
<feature type="mutagenesis site" description="Impairs ATPase activity of the PP2A(D):PPP2R4 complex; no effect on interaction with the PP2A(D) complex." evidence="4">
    <original>D</original>
    <variation>A</variation>
    <location>
        <position position="185"/>
    </location>
</feature>
<feature type="mutagenesis site" description="Impairs ATPase activity of the PP2A(D):PPP2R4 complex; no effect on interaction with the PP2A(D) complex." evidence="4">
    <original>A</original>
    <variation>D</variation>
    <location>
        <position position="239"/>
    </location>
</feature>
<feature type="mutagenesis site" description="Impairs ATPase activity of the PP2A(D):PPP2R4 complex; no effect on interaction with the PP2A(D) complex." evidence="4">
    <original>G</original>
    <variation>D</variation>
    <location>
        <position position="240"/>
    </location>
</feature>
<feature type="mutagenesis site" description="Impairs interaction with the PP2A(D) complex." evidence="4">
    <original>V</original>
    <variation>D</variation>
    <location>
        <position position="244"/>
    </location>
</feature>
<feature type="mutagenesis site" description="Abolishes interaction with the PP2A(D) complex." evidence="4">
    <original>E</original>
    <variation>A</variation>
    <location>
        <position position="305"/>
    </location>
</feature>
<feature type="mutagenesis site" description="Impairs interaction with the PP2A(D) complex." evidence="4">
    <original>V</original>
    <variation>D</variation>
    <location>
        <position position="316"/>
    </location>
</feature>
<feature type="mutagenesis site" description="Abolishes interaction with the PP2A(D) complex." evidence="4">
    <original>G</original>
    <variation>D</variation>
    <location>
        <position position="325"/>
    </location>
</feature>
<feature type="mutagenesis site" description="Abolishes interaction with the PP2A(D) complex." evidence="4">
    <original>M</original>
    <variation>D</variation>
    <location>
        <position position="329"/>
    </location>
</feature>
<feature type="mutagenesis site" description="Impairs interaction with the PP2A(D) complex." evidence="4">
    <original>K</original>
    <variation>G</variation>
    <location>
        <position position="337"/>
    </location>
</feature>
<feature type="sequence conflict" description="In Ref. 1; CAA51873, 2; CAA60163 and 3; CAB77601/CAB77602." evidence="14" ref="1 2 3">
    <original>V</original>
    <variation>L</variation>
    <location>
        <position position="113"/>
    </location>
</feature>
<feature type="sequence conflict" description="In Ref. 2; CAA60163 and 3; CAB77601/CAB77602/CAB77603." evidence="14" ref="2 3">
    <location>
        <position position="297"/>
    </location>
</feature>
<feature type="sequence conflict" description="In Ref. 1; AA sequence." evidence="14" ref="1">
    <original>S</original>
    <variation>V</variation>
    <location>
        <position position="357"/>
    </location>
</feature>
<feature type="helix" evidence="22">
    <location>
        <begin position="34"/>
        <end position="40"/>
    </location>
</feature>
<feature type="helix" evidence="22">
    <location>
        <begin position="43"/>
        <end position="58"/>
    </location>
</feature>
<feature type="turn" evidence="22">
    <location>
        <begin position="59"/>
        <end position="61"/>
    </location>
</feature>
<feature type="helix" evidence="22">
    <location>
        <begin position="108"/>
        <end position="124"/>
    </location>
</feature>
<feature type="strand" evidence="22">
    <location>
        <begin position="134"/>
        <end position="136"/>
    </location>
</feature>
<feature type="helix" evidence="22">
    <location>
        <begin position="139"/>
        <end position="156"/>
    </location>
</feature>
<feature type="helix" evidence="22">
    <location>
        <begin position="161"/>
        <end position="166"/>
    </location>
</feature>
<feature type="helix" evidence="22">
    <location>
        <begin position="167"/>
        <end position="175"/>
    </location>
</feature>
<feature type="turn" evidence="22">
    <location>
        <begin position="181"/>
        <end position="184"/>
    </location>
</feature>
<feature type="helix" evidence="22">
    <location>
        <begin position="188"/>
        <end position="203"/>
    </location>
</feature>
<feature type="helix" evidence="22">
    <location>
        <begin position="209"/>
        <end position="211"/>
    </location>
</feature>
<feature type="helix" evidence="22">
    <location>
        <begin position="212"/>
        <end position="217"/>
    </location>
</feature>
<feature type="helix" evidence="22">
    <location>
        <begin position="219"/>
        <end position="233"/>
    </location>
</feature>
<feature type="strand" evidence="22">
    <location>
        <begin position="237"/>
        <end position="240"/>
    </location>
</feature>
<feature type="helix" evidence="22">
    <location>
        <begin position="243"/>
        <end position="245"/>
    </location>
</feature>
<feature type="strand" evidence="22">
    <location>
        <begin position="247"/>
        <end position="250"/>
    </location>
</feature>
<feature type="helix" evidence="22">
    <location>
        <begin position="253"/>
        <end position="261"/>
    </location>
</feature>
<feature type="turn" evidence="22">
    <location>
        <begin position="262"/>
        <end position="264"/>
    </location>
</feature>
<feature type="helix" evidence="22">
    <location>
        <begin position="270"/>
        <end position="274"/>
    </location>
</feature>
<feature type="helix" evidence="22">
    <location>
        <begin position="276"/>
        <end position="282"/>
    </location>
</feature>
<feature type="helix" evidence="22">
    <location>
        <begin position="283"/>
        <end position="285"/>
    </location>
</feature>
<feature type="helix" evidence="22">
    <location>
        <begin position="287"/>
        <end position="298"/>
    </location>
</feature>
<feature type="helix" evidence="22">
    <location>
        <begin position="303"/>
        <end position="306"/>
    </location>
</feature>
<feature type="helix" evidence="22">
    <location>
        <begin position="308"/>
        <end position="313"/>
    </location>
</feature>
<feature type="helix" evidence="22">
    <location>
        <begin position="319"/>
        <end position="333"/>
    </location>
</feature>
<feature type="turn" evidence="22">
    <location>
        <begin position="334"/>
        <end position="336"/>
    </location>
</feature>
<feature type="helix" evidence="22">
    <location>
        <begin position="338"/>
        <end position="341"/>
    </location>
</feature>
<feature type="strand" evidence="22">
    <location>
        <begin position="348"/>
        <end position="350"/>
    </location>
</feature>
<feature type="strand" evidence="22">
    <location>
        <begin position="352"/>
        <end position="354"/>
    </location>
</feature>
<keyword id="KW-0002">3D-structure</keyword>
<keyword id="KW-0007">Acetylation</keyword>
<keyword id="KW-0025">Alternative splicing</keyword>
<keyword id="KW-0067">ATP-binding</keyword>
<keyword id="KW-0963">Cytoplasm</keyword>
<keyword id="KW-0903">Direct protein sequencing</keyword>
<keyword id="KW-0225">Disease variant</keyword>
<keyword id="KW-0991">Intellectual disability</keyword>
<keyword id="KW-0413">Isomerase</keyword>
<keyword id="KW-0460">Magnesium</keyword>
<keyword id="KW-0479">Metal-binding</keyword>
<keyword id="KW-0523">Neurodegeneration</keyword>
<keyword id="KW-0547">Nucleotide-binding</keyword>
<keyword id="KW-0539">Nucleus</keyword>
<keyword id="KW-0907">Parkinson disease</keyword>
<keyword id="KW-0908">Parkinsonism</keyword>
<keyword id="KW-1267">Proteomics identification</keyword>
<keyword id="KW-1185">Reference proteome</keyword>
<keyword id="KW-0697">Rotamase</keyword>
<name>PTPA_HUMAN</name>
<dbReference type="EC" id="5.2.1.8" evidence="2"/>
<dbReference type="EMBL" id="X73478">
    <property type="protein sequence ID" value="CAA51873.1"/>
    <property type="molecule type" value="mRNA"/>
</dbReference>
<dbReference type="EMBL" id="X86428">
    <property type="protein sequence ID" value="CAA60163.1"/>
    <property type="molecule type" value="Genomic_DNA"/>
</dbReference>
<dbReference type="EMBL" id="X86429">
    <property type="protein sequence ID" value="CAA60163.1"/>
    <property type="status" value="JOINED"/>
    <property type="molecule type" value="Genomic_DNA"/>
</dbReference>
<dbReference type="EMBL" id="X86430">
    <property type="protein sequence ID" value="CAA60163.1"/>
    <property type="status" value="JOINED"/>
    <property type="molecule type" value="Genomic_DNA"/>
</dbReference>
<dbReference type="EMBL" id="X86432">
    <property type="protein sequence ID" value="CAA60163.1"/>
    <property type="status" value="JOINED"/>
    <property type="molecule type" value="Genomic_DNA"/>
</dbReference>
<dbReference type="EMBL" id="X86434">
    <property type="protein sequence ID" value="CAA60163.1"/>
    <property type="status" value="JOINED"/>
    <property type="molecule type" value="Genomic_DNA"/>
</dbReference>
<dbReference type="EMBL" id="X86435">
    <property type="protein sequence ID" value="CAA60163.1"/>
    <property type="status" value="JOINED"/>
    <property type="molecule type" value="Genomic_DNA"/>
</dbReference>
<dbReference type="EMBL" id="X86436">
    <property type="protein sequence ID" value="CAA60163.1"/>
    <property type="status" value="JOINED"/>
    <property type="molecule type" value="Genomic_DNA"/>
</dbReference>
<dbReference type="EMBL" id="X86437">
    <property type="protein sequence ID" value="CAA60163.1"/>
    <property type="status" value="JOINED"/>
    <property type="molecule type" value="Genomic_DNA"/>
</dbReference>
<dbReference type="EMBL" id="X86438">
    <property type="protein sequence ID" value="CAA60163.1"/>
    <property type="status" value="JOINED"/>
    <property type="molecule type" value="Genomic_DNA"/>
</dbReference>
<dbReference type="EMBL" id="X86439">
    <property type="protein sequence ID" value="CAA60163.1"/>
    <property type="status" value="JOINED"/>
    <property type="molecule type" value="Genomic_DNA"/>
</dbReference>
<dbReference type="EMBL" id="X86428">
    <property type="protein sequence ID" value="CAB77601.1"/>
    <property type="molecule type" value="Genomic_DNA"/>
</dbReference>
<dbReference type="EMBL" id="X86429">
    <property type="protein sequence ID" value="CAB77601.1"/>
    <property type="status" value="JOINED"/>
    <property type="molecule type" value="Genomic_DNA"/>
</dbReference>
<dbReference type="EMBL" id="X86430">
    <property type="protein sequence ID" value="CAB77601.1"/>
    <property type="status" value="JOINED"/>
    <property type="molecule type" value="Genomic_DNA"/>
</dbReference>
<dbReference type="EMBL" id="X86431">
    <property type="protein sequence ID" value="CAB77601.1"/>
    <property type="status" value="JOINED"/>
    <property type="molecule type" value="Genomic_DNA"/>
</dbReference>
<dbReference type="EMBL" id="X86432">
    <property type="protein sequence ID" value="CAB77601.1"/>
    <property type="status" value="JOINED"/>
    <property type="molecule type" value="Genomic_DNA"/>
</dbReference>
<dbReference type="EMBL" id="X86434">
    <property type="protein sequence ID" value="CAB77601.1"/>
    <property type="status" value="JOINED"/>
    <property type="molecule type" value="Genomic_DNA"/>
</dbReference>
<dbReference type="EMBL" id="X86435">
    <property type="protein sequence ID" value="CAB77601.1"/>
    <property type="status" value="JOINED"/>
    <property type="molecule type" value="Genomic_DNA"/>
</dbReference>
<dbReference type="EMBL" id="X86436">
    <property type="protein sequence ID" value="CAB77601.1"/>
    <property type="status" value="JOINED"/>
    <property type="molecule type" value="Genomic_DNA"/>
</dbReference>
<dbReference type="EMBL" id="X86437">
    <property type="protein sequence ID" value="CAB77601.1"/>
    <property type="status" value="JOINED"/>
    <property type="molecule type" value="Genomic_DNA"/>
</dbReference>
<dbReference type="EMBL" id="X86438">
    <property type="protein sequence ID" value="CAB77601.1"/>
    <property type="status" value="JOINED"/>
    <property type="molecule type" value="Genomic_DNA"/>
</dbReference>
<dbReference type="EMBL" id="X86439">
    <property type="protein sequence ID" value="CAB77601.1"/>
    <property type="status" value="JOINED"/>
    <property type="molecule type" value="Genomic_DNA"/>
</dbReference>
<dbReference type="EMBL" id="X86428">
    <property type="protein sequence ID" value="CAB77602.1"/>
    <property type="molecule type" value="Genomic_DNA"/>
</dbReference>
<dbReference type="EMBL" id="X86429">
    <property type="protein sequence ID" value="CAB77602.1"/>
    <property type="status" value="JOINED"/>
    <property type="molecule type" value="Genomic_DNA"/>
</dbReference>
<dbReference type="EMBL" id="X86432">
    <property type="protein sequence ID" value="CAB77602.1"/>
    <property type="status" value="JOINED"/>
    <property type="molecule type" value="Genomic_DNA"/>
</dbReference>
<dbReference type="EMBL" id="X86434">
    <property type="protein sequence ID" value="CAB77602.1"/>
    <property type="status" value="JOINED"/>
    <property type="molecule type" value="Genomic_DNA"/>
</dbReference>
<dbReference type="EMBL" id="X86435">
    <property type="protein sequence ID" value="CAB77602.1"/>
    <property type="status" value="JOINED"/>
    <property type="molecule type" value="Genomic_DNA"/>
</dbReference>
<dbReference type="EMBL" id="X86436">
    <property type="protein sequence ID" value="CAB77602.1"/>
    <property type="status" value="JOINED"/>
    <property type="molecule type" value="Genomic_DNA"/>
</dbReference>
<dbReference type="EMBL" id="X86437">
    <property type="protein sequence ID" value="CAB77602.1"/>
    <property type="status" value="JOINED"/>
    <property type="molecule type" value="Genomic_DNA"/>
</dbReference>
<dbReference type="EMBL" id="X86438">
    <property type="protein sequence ID" value="CAB77602.1"/>
    <property type="status" value="JOINED"/>
    <property type="molecule type" value="Genomic_DNA"/>
</dbReference>
<dbReference type="EMBL" id="X86439">
    <property type="protein sequence ID" value="CAB77602.1"/>
    <property type="status" value="JOINED"/>
    <property type="molecule type" value="Genomic_DNA"/>
</dbReference>
<dbReference type="EMBL" id="X86428">
    <property type="protein sequence ID" value="CAB77603.1"/>
    <property type="molecule type" value="Genomic_DNA"/>
</dbReference>
<dbReference type="EMBL" id="X86429">
    <property type="protein sequence ID" value="CAB77603.1"/>
    <property type="status" value="JOINED"/>
    <property type="molecule type" value="Genomic_DNA"/>
</dbReference>
<dbReference type="EMBL" id="X86430">
    <property type="protein sequence ID" value="CAB77603.1"/>
    <property type="status" value="JOINED"/>
    <property type="molecule type" value="Genomic_DNA"/>
</dbReference>
<dbReference type="EMBL" id="X86434">
    <property type="protein sequence ID" value="CAB77603.1"/>
    <property type="status" value="JOINED"/>
    <property type="molecule type" value="Genomic_DNA"/>
</dbReference>
<dbReference type="EMBL" id="X86435">
    <property type="protein sequence ID" value="CAB77603.1"/>
    <property type="status" value="JOINED"/>
    <property type="molecule type" value="Genomic_DNA"/>
</dbReference>
<dbReference type="EMBL" id="X86436">
    <property type="protein sequence ID" value="CAB77603.1"/>
    <property type="status" value="JOINED"/>
    <property type="molecule type" value="Genomic_DNA"/>
</dbReference>
<dbReference type="EMBL" id="X86437">
    <property type="protein sequence ID" value="CAB77603.1"/>
    <property type="status" value="JOINED"/>
    <property type="molecule type" value="Genomic_DNA"/>
</dbReference>
<dbReference type="EMBL" id="X86438">
    <property type="protein sequence ID" value="CAB77603.1"/>
    <property type="status" value="JOINED"/>
    <property type="molecule type" value="Genomic_DNA"/>
</dbReference>
<dbReference type="EMBL" id="X86439">
    <property type="protein sequence ID" value="CAB77603.1"/>
    <property type="status" value="JOINED"/>
    <property type="molecule type" value="Genomic_DNA"/>
</dbReference>
<dbReference type="EMBL" id="AK302043">
    <property type="protein sequence ID" value="BAG63436.1"/>
    <property type="molecule type" value="mRNA"/>
</dbReference>
<dbReference type="EMBL" id="BT020119">
    <property type="protein sequence ID" value="AAV38922.1"/>
    <property type="molecule type" value="mRNA"/>
</dbReference>
<dbReference type="EMBL" id="AK222788">
    <property type="protein sequence ID" value="BAD96508.1"/>
    <property type="molecule type" value="mRNA"/>
</dbReference>
<dbReference type="EMBL" id="AL158151">
    <property type="status" value="NOT_ANNOTATED_CDS"/>
    <property type="molecule type" value="Genomic_DNA"/>
</dbReference>
<dbReference type="EMBL" id="CH471090">
    <property type="protein sequence ID" value="EAW87876.1"/>
    <property type="molecule type" value="Genomic_DNA"/>
</dbReference>
<dbReference type="EMBL" id="CH471090">
    <property type="protein sequence ID" value="EAW87882.1"/>
    <property type="molecule type" value="Genomic_DNA"/>
</dbReference>
<dbReference type="EMBL" id="BC002545">
    <property type="protein sequence ID" value="AAH02545.1"/>
    <property type="molecule type" value="mRNA"/>
</dbReference>
<dbReference type="EMBL" id="BC011605">
    <property type="protein sequence ID" value="AAH11605.1"/>
    <property type="molecule type" value="mRNA"/>
</dbReference>
<dbReference type="CCDS" id="CCDS65156.1">
    <molecule id="Q15257-3"/>
</dbReference>
<dbReference type="CCDS" id="CCDS6920.1">
    <molecule id="Q15257-2"/>
</dbReference>
<dbReference type="PIR" id="A54021">
    <property type="entry name" value="A54021"/>
</dbReference>
<dbReference type="RefSeq" id="NP_001180326.1">
    <property type="nucleotide sequence ID" value="NM_001193397.1"/>
</dbReference>
<dbReference type="RefSeq" id="NP_001258761.1">
    <molecule id="Q15257-3"/>
    <property type="nucleotide sequence ID" value="NM_001271832.2"/>
</dbReference>
<dbReference type="RefSeq" id="NP_066954.2">
    <molecule id="Q15257-2"/>
    <property type="nucleotide sequence ID" value="NM_021131.4"/>
</dbReference>
<dbReference type="RefSeq" id="NP_821067.1">
    <molecule id="Q15257-2"/>
    <property type="nucleotide sequence ID" value="NM_178000.3"/>
</dbReference>
<dbReference type="RefSeq" id="NP_821068.1">
    <molecule id="Q15257-1"/>
    <property type="nucleotide sequence ID" value="NM_178001.3"/>
</dbReference>
<dbReference type="RefSeq" id="NP_821070.1">
    <molecule id="Q15257-4"/>
    <property type="nucleotide sequence ID" value="NM_178003.3"/>
</dbReference>
<dbReference type="PDB" id="2G62">
    <property type="method" value="X-ray"/>
    <property type="resolution" value="1.60 A"/>
    <property type="chains" value="A=22-358"/>
</dbReference>
<dbReference type="PDB" id="2HV6">
    <property type="method" value="X-ray"/>
    <property type="resolution" value="1.90 A"/>
    <property type="chains" value="A/B=1-358"/>
</dbReference>
<dbReference type="PDB" id="2HV7">
    <property type="method" value="X-ray"/>
    <property type="resolution" value="2.50 A"/>
    <property type="chains" value="A/B/C/D/E/F/G/H=1-358"/>
</dbReference>
<dbReference type="PDB" id="2IXM">
    <property type="method" value="X-ray"/>
    <property type="resolution" value="1.50 A"/>
    <property type="chains" value="A=20-357"/>
</dbReference>
<dbReference type="PDB" id="4LAC">
    <property type="method" value="X-ray"/>
    <property type="resolution" value="2.82 A"/>
    <property type="chains" value="B=19-358"/>
</dbReference>
<dbReference type="PDB" id="4NY3">
    <property type="method" value="X-ray"/>
    <property type="resolution" value="1.80 A"/>
    <property type="chains" value="A/B=22-358"/>
</dbReference>
<dbReference type="PDBsum" id="2G62"/>
<dbReference type="PDBsum" id="2HV6"/>
<dbReference type="PDBsum" id="2HV7"/>
<dbReference type="PDBsum" id="2IXM"/>
<dbReference type="PDBsum" id="4LAC"/>
<dbReference type="PDBsum" id="4NY3"/>
<dbReference type="SMR" id="Q15257"/>
<dbReference type="BioGRID" id="111516">
    <property type="interactions" value="112"/>
</dbReference>
<dbReference type="FunCoup" id="Q15257">
    <property type="interactions" value="1883"/>
</dbReference>
<dbReference type="IntAct" id="Q15257">
    <property type="interactions" value="25"/>
</dbReference>
<dbReference type="MINT" id="Q15257"/>
<dbReference type="STRING" id="9606.ENSP00000377036"/>
<dbReference type="BindingDB" id="Q15257"/>
<dbReference type="ChEMBL" id="CHEMBL2505"/>
<dbReference type="GlyCosmos" id="Q15257">
    <property type="glycosylation" value="1 site, 1 glycan"/>
</dbReference>
<dbReference type="GlyGen" id="Q15257">
    <property type="glycosylation" value="1 site, 1 O-linked glycan (1 site)"/>
</dbReference>
<dbReference type="iPTMnet" id="Q15257"/>
<dbReference type="MetOSite" id="Q15257"/>
<dbReference type="PhosphoSitePlus" id="Q15257"/>
<dbReference type="SwissPalm" id="Q15257"/>
<dbReference type="BioMuta" id="PTPA"/>
<dbReference type="DMDM" id="116242737"/>
<dbReference type="OGP" id="Q15257"/>
<dbReference type="CPTAC" id="CPTAC-259"/>
<dbReference type="CPTAC" id="CPTAC-260"/>
<dbReference type="jPOST" id="Q15257"/>
<dbReference type="MassIVE" id="Q15257"/>
<dbReference type="PaxDb" id="9606-ENSP00000377036"/>
<dbReference type="PeptideAtlas" id="Q15257"/>
<dbReference type="ProteomicsDB" id="60499">
    <molecule id="Q15257-1"/>
</dbReference>
<dbReference type="ProteomicsDB" id="60500">
    <molecule id="Q15257-2"/>
</dbReference>
<dbReference type="ProteomicsDB" id="60501">
    <molecule id="Q15257-3"/>
</dbReference>
<dbReference type="ProteomicsDB" id="60502">
    <molecule id="Q15257-4"/>
</dbReference>
<dbReference type="Pumba" id="Q15257"/>
<dbReference type="Antibodypedia" id="1074">
    <property type="antibodies" value="372 antibodies from 39 providers"/>
</dbReference>
<dbReference type="CPTC" id="Q15257">
    <property type="antibodies" value="4 antibodies"/>
</dbReference>
<dbReference type="DNASU" id="5524"/>
<dbReference type="Ensembl" id="ENST00000337738.6">
    <molecule id="Q15257-1"/>
    <property type="protein sequence ID" value="ENSP00000337448.1"/>
    <property type="gene ID" value="ENSG00000119383.21"/>
</dbReference>
<dbReference type="Ensembl" id="ENST00000355007.7">
    <molecule id="Q15257-4"/>
    <property type="protein sequence ID" value="ENSP00000347109.3"/>
    <property type="gene ID" value="ENSG00000119383.21"/>
</dbReference>
<dbReference type="Ensembl" id="ENST00000357197.8">
    <molecule id="Q15257-3"/>
    <property type="protein sequence ID" value="ENSP00000349726.4"/>
    <property type="gene ID" value="ENSG00000119383.21"/>
</dbReference>
<dbReference type="Ensembl" id="ENST00000393370.7">
    <molecule id="Q15257-2"/>
    <property type="protein sequence ID" value="ENSP00000377036.2"/>
    <property type="gene ID" value="ENSG00000119383.21"/>
</dbReference>
<dbReference type="GeneID" id="5524"/>
<dbReference type="KEGG" id="hsa:5524"/>
<dbReference type="MANE-Select" id="ENST00000393370.7">
    <molecule id="Q15257-2"/>
    <property type="protein sequence ID" value="ENSP00000377036.2"/>
    <property type="RefSeq nucleotide sequence ID" value="NM_178000.3"/>
    <property type="RefSeq protein sequence ID" value="NP_821067.1"/>
</dbReference>
<dbReference type="UCSC" id="uc004bxl.3">
    <molecule id="Q15257-1"/>
    <property type="organism name" value="human"/>
</dbReference>
<dbReference type="AGR" id="HGNC:9308"/>
<dbReference type="CTD" id="5524"/>
<dbReference type="DisGeNET" id="5524"/>
<dbReference type="GeneCards" id="PTPA"/>
<dbReference type="HGNC" id="HGNC:9308">
    <property type="gene designation" value="PTPA"/>
</dbReference>
<dbReference type="HPA" id="ENSG00000119383">
    <property type="expression patterns" value="Low tissue specificity"/>
</dbReference>
<dbReference type="MalaCards" id="PTPA"/>
<dbReference type="MIM" id="600756">
    <property type="type" value="gene"/>
</dbReference>
<dbReference type="MIM" id="620482">
    <property type="type" value="phenotype"/>
</dbReference>
<dbReference type="neXtProt" id="NX_Q15257"/>
<dbReference type="OpenTargets" id="ENSG00000119383"/>
<dbReference type="PharmGKB" id="PA33671"/>
<dbReference type="VEuPathDB" id="HostDB:ENSG00000119383"/>
<dbReference type="eggNOG" id="KOG2867">
    <property type="taxonomic scope" value="Eukaryota"/>
</dbReference>
<dbReference type="GeneTree" id="ENSGT00390000011500"/>
<dbReference type="InParanoid" id="Q15257"/>
<dbReference type="OMA" id="SWIKINA"/>
<dbReference type="OrthoDB" id="16120at2759"/>
<dbReference type="PAN-GO" id="Q15257">
    <property type="GO annotations" value="6 GO annotations based on evolutionary models"/>
</dbReference>
<dbReference type="PhylomeDB" id="Q15257"/>
<dbReference type="TreeFam" id="TF105555"/>
<dbReference type="PathwayCommons" id="Q15257"/>
<dbReference type="SignaLink" id="Q15257"/>
<dbReference type="SIGNOR" id="Q15257"/>
<dbReference type="BioGRID-ORCS" id="5524">
    <property type="hits" value="570 hits in 1181 CRISPR screens"/>
</dbReference>
<dbReference type="ChiTaRS" id="PTPA">
    <property type="organism name" value="human"/>
</dbReference>
<dbReference type="EvolutionaryTrace" id="Q15257"/>
<dbReference type="GeneWiki" id="PPP2R4"/>
<dbReference type="GenomeRNAi" id="5524"/>
<dbReference type="Pharos" id="Q15257">
    <property type="development level" value="Tchem"/>
</dbReference>
<dbReference type="PRO" id="PR:Q15257"/>
<dbReference type="Proteomes" id="UP000005640">
    <property type="component" value="Chromosome 9"/>
</dbReference>
<dbReference type="RNAct" id="Q15257">
    <property type="molecule type" value="protein"/>
</dbReference>
<dbReference type="Bgee" id="ENSG00000119383">
    <property type="expression patterns" value="Expressed in endometrium epithelium and 210 other cell types or tissues"/>
</dbReference>
<dbReference type="ExpressionAtlas" id="Q15257">
    <property type="expression patterns" value="baseline and differential"/>
</dbReference>
<dbReference type="GO" id="GO:1904949">
    <property type="term" value="C:ATPase complex"/>
    <property type="evidence" value="ECO:0000314"/>
    <property type="project" value="HGNC-UCL"/>
</dbReference>
<dbReference type="GO" id="GO:0034704">
    <property type="term" value="C:calcium channel complex"/>
    <property type="evidence" value="ECO:0000314"/>
    <property type="project" value="BHF-UCL"/>
</dbReference>
<dbReference type="GO" id="GO:0005737">
    <property type="term" value="C:cytoplasm"/>
    <property type="evidence" value="ECO:0000314"/>
    <property type="project" value="UniProtKB"/>
</dbReference>
<dbReference type="GO" id="GO:0070062">
    <property type="term" value="C:extracellular exosome"/>
    <property type="evidence" value="ECO:0007005"/>
    <property type="project" value="UniProtKB"/>
</dbReference>
<dbReference type="GO" id="GO:0005654">
    <property type="term" value="C:nucleoplasm"/>
    <property type="evidence" value="ECO:0000314"/>
    <property type="project" value="HPA"/>
</dbReference>
<dbReference type="GO" id="GO:0005634">
    <property type="term" value="C:nucleus"/>
    <property type="evidence" value="ECO:0000314"/>
    <property type="project" value="UniProtKB"/>
</dbReference>
<dbReference type="GO" id="GO:0000159">
    <property type="term" value="C:protein phosphatase type 2A complex"/>
    <property type="evidence" value="ECO:0000314"/>
    <property type="project" value="BHF-UCL"/>
</dbReference>
<dbReference type="GO" id="GO:0005524">
    <property type="term" value="F:ATP binding"/>
    <property type="evidence" value="ECO:0000314"/>
    <property type="project" value="HGNC-UCL"/>
</dbReference>
<dbReference type="GO" id="GO:0046872">
    <property type="term" value="F:metal ion binding"/>
    <property type="evidence" value="ECO:0007669"/>
    <property type="project" value="UniProtKB-KW"/>
</dbReference>
<dbReference type="GO" id="GO:0003755">
    <property type="term" value="F:peptidyl-prolyl cis-trans isomerase activity"/>
    <property type="evidence" value="ECO:0000318"/>
    <property type="project" value="GO_Central"/>
</dbReference>
<dbReference type="GO" id="GO:0019902">
    <property type="term" value="F:phosphatase binding"/>
    <property type="evidence" value="ECO:0000314"/>
    <property type="project" value="HGNC-UCL"/>
</dbReference>
<dbReference type="GO" id="GO:0042803">
    <property type="term" value="F:protein homodimerization activity"/>
    <property type="evidence" value="ECO:0000314"/>
    <property type="project" value="HGNC-UCL"/>
</dbReference>
<dbReference type="GO" id="GO:0051721">
    <property type="term" value="F:protein phosphatase 2A binding"/>
    <property type="evidence" value="ECO:0000314"/>
    <property type="project" value="HGNC-UCL"/>
</dbReference>
<dbReference type="GO" id="GO:0019888">
    <property type="term" value="F:protein phosphatase regulator activity"/>
    <property type="evidence" value="ECO:0000314"/>
    <property type="project" value="HGNC-UCL"/>
</dbReference>
<dbReference type="GO" id="GO:0008160">
    <property type="term" value="F:protein tyrosine phosphatase activator activity"/>
    <property type="evidence" value="ECO:0000314"/>
    <property type="project" value="HGNC-UCL"/>
</dbReference>
<dbReference type="GO" id="GO:0005102">
    <property type="term" value="F:signaling receptor binding"/>
    <property type="evidence" value="ECO:0000353"/>
    <property type="project" value="BHF-UCL"/>
</dbReference>
<dbReference type="GO" id="GO:0007052">
    <property type="term" value="P:mitotic spindle organization"/>
    <property type="evidence" value="ECO:0000318"/>
    <property type="project" value="GO_Central"/>
</dbReference>
<dbReference type="GO" id="GO:0043065">
    <property type="term" value="P:positive regulation of apoptotic process"/>
    <property type="evidence" value="ECO:0000314"/>
    <property type="project" value="UniProtKB"/>
</dbReference>
<dbReference type="CDD" id="cd04087">
    <property type="entry name" value="PTPA"/>
    <property type="match status" value="1"/>
</dbReference>
<dbReference type="FunFam" id="1.20.120.1150:FF:000001">
    <property type="entry name" value="Serine/threonine-protein phosphatase 2A activator"/>
    <property type="match status" value="1"/>
</dbReference>
<dbReference type="Gene3D" id="1.20.120.1150">
    <property type="match status" value="1"/>
</dbReference>
<dbReference type="InterPro" id="IPR004327">
    <property type="entry name" value="Phstyr_phstse_ac"/>
</dbReference>
<dbReference type="InterPro" id="IPR043170">
    <property type="entry name" value="PTPA_C_lid"/>
</dbReference>
<dbReference type="InterPro" id="IPR037218">
    <property type="entry name" value="PTPA_sf"/>
</dbReference>
<dbReference type="PANTHER" id="PTHR10012">
    <property type="entry name" value="SERINE/THREONINE-PROTEIN PHOSPHATASE 2A REGULATORY SUBUNIT B"/>
    <property type="match status" value="1"/>
</dbReference>
<dbReference type="PANTHER" id="PTHR10012:SF0">
    <property type="entry name" value="SERINE_THREONINE-PROTEIN PHOSPHATASE 2A ACTIVATOR"/>
    <property type="match status" value="1"/>
</dbReference>
<dbReference type="Pfam" id="PF03095">
    <property type="entry name" value="PTPA"/>
    <property type="match status" value="1"/>
</dbReference>
<dbReference type="PIRSF" id="PIRSF016325">
    <property type="entry name" value="Phstyr_phstse_ac"/>
    <property type="match status" value="1"/>
</dbReference>
<dbReference type="SUPFAM" id="SSF140984">
    <property type="entry name" value="PTPA-like"/>
    <property type="match status" value="1"/>
</dbReference>
<proteinExistence type="evidence at protein level"/>
<gene>
    <name evidence="15" type="primary">PTPA</name>
    <name type="synonym">PPP2R4</name>
</gene>
<reference key="1">
    <citation type="journal article" date="1994" name="J. Biol. Chem.">
        <title>Molecular cloning, expression, and characterization of PTPA, a protein that activates the tyrosyl phosphatase activity of protein phosphatase 2A.</title>
        <authorList>
            <person name="Cayla X."/>
            <person name="Van Hoof C."/>
            <person name="Bosch M."/>
            <person name="Waelkens E."/>
            <person name="Peeters B."/>
            <person name="Merlevede W."/>
            <person name="Goris J."/>
        </authorList>
    </citation>
    <scope>NUCLEOTIDE SEQUENCE [MRNA] (ISOFORM 1)</scope>
    <scope>PARTIAL PROTEIN SEQUENCE</scope>
    <source>
        <tissue>Heart</tissue>
    </source>
</reference>
<reference key="2">
    <citation type="journal article" date="1995" name="Genomics">
        <title>Structure and chromosomal localization of the human gene of the phosphotyrosyl phosphatase activator (PTPA) of protein phosphatase 2A.</title>
        <authorList>
            <person name="Van Hoof C."/>
            <person name="Aly M."/>
            <person name="Garcia A."/>
            <person name="Cayla X."/>
            <person name="Cassiman J.-J."/>
            <person name="Merlevede W."/>
            <person name="Goris J."/>
        </authorList>
    </citation>
    <scope>NUCLEOTIDE SEQUENCE [GENOMIC DNA] (ISOFORM 1)</scope>
    <source>
        <tissue>Blood</tissue>
    </source>
</reference>
<reference key="3">
    <citation type="journal article" date="2000" name="Eur. J. Biochem.">
        <title>Identification and characterization of alternative splice products encoded by the human phosphotyrosyl phosphatase activator gene.</title>
        <authorList>
            <person name="Janssens V."/>
            <person name="van Hoof C."/>
            <person name="Martens E."/>
            <person name="de Baere I."/>
            <person name="Merlevede W."/>
            <person name="Goris J."/>
        </authorList>
    </citation>
    <scope>NUCLEOTIDE SEQUENCE [GENOMIC DNA] (ISOFORMS 2; 3 AND 4)</scope>
</reference>
<reference key="4">
    <citation type="journal article" date="2004" name="Nat. Genet.">
        <title>Complete sequencing and characterization of 21,243 full-length human cDNAs.</title>
        <authorList>
            <person name="Ota T."/>
            <person name="Suzuki Y."/>
            <person name="Nishikawa T."/>
            <person name="Otsuki T."/>
            <person name="Sugiyama T."/>
            <person name="Irie R."/>
            <person name="Wakamatsu A."/>
            <person name="Hayashi K."/>
            <person name="Sato H."/>
            <person name="Nagai K."/>
            <person name="Kimura K."/>
            <person name="Makita H."/>
            <person name="Sekine M."/>
            <person name="Obayashi M."/>
            <person name="Nishi T."/>
            <person name="Shibahara T."/>
            <person name="Tanaka T."/>
            <person name="Ishii S."/>
            <person name="Yamamoto J."/>
            <person name="Saito K."/>
            <person name="Kawai Y."/>
            <person name="Isono Y."/>
            <person name="Nakamura Y."/>
            <person name="Nagahari K."/>
            <person name="Murakami K."/>
            <person name="Yasuda T."/>
            <person name="Iwayanagi T."/>
            <person name="Wagatsuma M."/>
            <person name="Shiratori A."/>
            <person name="Sudo H."/>
            <person name="Hosoiri T."/>
            <person name="Kaku Y."/>
            <person name="Kodaira H."/>
            <person name="Kondo H."/>
            <person name="Sugawara M."/>
            <person name="Takahashi M."/>
            <person name="Kanda K."/>
            <person name="Yokoi T."/>
            <person name="Furuya T."/>
            <person name="Kikkawa E."/>
            <person name="Omura Y."/>
            <person name="Abe K."/>
            <person name="Kamihara K."/>
            <person name="Katsuta N."/>
            <person name="Sato K."/>
            <person name="Tanikawa M."/>
            <person name="Yamazaki M."/>
            <person name="Ninomiya K."/>
            <person name="Ishibashi T."/>
            <person name="Yamashita H."/>
            <person name="Murakawa K."/>
            <person name="Fujimori K."/>
            <person name="Tanai H."/>
            <person name="Kimata M."/>
            <person name="Watanabe M."/>
            <person name="Hiraoka S."/>
            <person name="Chiba Y."/>
            <person name="Ishida S."/>
            <person name="Ono Y."/>
            <person name="Takiguchi S."/>
            <person name="Watanabe S."/>
            <person name="Yosida M."/>
            <person name="Hotuta T."/>
            <person name="Kusano J."/>
            <person name="Kanehori K."/>
            <person name="Takahashi-Fujii A."/>
            <person name="Hara H."/>
            <person name="Tanase T.-O."/>
            <person name="Nomura Y."/>
            <person name="Togiya S."/>
            <person name="Komai F."/>
            <person name="Hara R."/>
            <person name="Takeuchi K."/>
            <person name="Arita M."/>
            <person name="Imose N."/>
            <person name="Musashino K."/>
            <person name="Yuuki H."/>
            <person name="Oshima A."/>
            <person name="Sasaki N."/>
            <person name="Aotsuka S."/>
            <person name="Yoshikawa Y."/>
            <person name="Matsunawa H."/>
            <person name="Ichihara T."/>
            <person name="Shiohata N."/>
            <person name="Sano S."/>
            <person name="Moriya S."/>
            <person name="Momiyama H."/>
            <person name="Satoh N."/>
            <person name="Takami S."/>
            <person name="Terashima Y."/>
            <person name="Suzuki O."/>
            <person name="Nakagawa S."/>
            <person name="Senoh A."/>
            <person name="Mizoguchi H."/>
            <person name="Goto Y."/>
            <person name="Shimizu F."/>
            <person name="Wakebe H."/>
            <person name="Hishigaki H."/>
            <person name="Watanabe T."/>
            <person name="Sugiyama A."/>
            <person name="Takemoto M."/>
            <person name="Kawakami B."/>
            <person name="Yamazaki M."/>
            <person name="Watanabe K."/>
            <person name="Kumagai A."/>
            <person name="Itakura S."/>
            <person name="Fukuzumi Y."/>
            <person name="Fujimori Y."/>
            <person name="Komiyama M."/>
            <person name="Tashiro H."/>
            <person name="Tanigami A."/>
            <person name="Fujiwara T."/>
            <person name="Ono T."/>
            <person name="Yamada K."/>
            <person name="Fujii Y."/>
            <person name="Ozaki K."/>
            <person name="Hirao M."/>
            <person name="Ohmori Y."/>
            <person name="Kawabata A."/>
            <person name="Hikiji T."/>
            <person name="Kobatake N."/>
            <person name="Inagaki H."/>
            <person name="Ikema Y."/>
            <person name="Okamoto S."/>
            <person name="Okitani R."/>
            <person name="Kawakami T."/>
            <person name="Noguchi S."/>
            <person name="Itoh T."/>
            <person name="Shigeta K."/>
            <person name="Senba T."/>
            <person name="Matsumura K."/>
            <person name="Nakajima Y."/>
            <person name="Mizuno T."/>
            <person name="Morinaga M."/>
            <person name="Sasaki M."/>
            <person name="Togashi T."/>
            <person name="Oyama M."/>
            <person name="Hata H."/>
            <person name="Watanabe M."/>
            <person name="Komatsu T."/>
            <person name="Mizushima-Sugano J."/>
            <person name="Satoh T."/>
            <person name="Shirai Y."/>
            <person name="Takahashi Y."/>
            <person name="Nakagawa K."/>
            <person name="Okumura K."/>
            <person name="Nagase T."/>
            <person name="Nomura N."/>
            <person name="Kikuchi H."/>
            <person name="Masuho Y."/>
            <person name="Yamashita R."/>
            <person name="Nakai K."/>
            <person name="Yada T."/>
            <person name="Nakamura Y."/>
            <person name="Ohara O."/>
            <person name="Isogai T."/>
            <person name="Sugano S."/>
        </authorList>
    </citation>
    <scope>NUCLEOTIDE SEQUENCE [LARGE SCALE MRNA] (ISOFORM 3)</scope>
    <source>
        <tissue>Testis</tissue>
    </source>
</reference>
<reference key="5">
    <citation type="submission" date="2004-10" db="EMBL/GenBank/DDBJ databases">
        <title>Cloning of human full-length CDSs in BD Creator(TM) system donor vector.</title>
        <authorList>
            <person name="Kalnine N."/>
            <person name="Chen X."/>
            <person name="Rolfs A."/>
            <person name="Halleck A."/>
            <person name="Hines L."/>
            <person name="Eisenstein S."/>
            <person name="Koundinya M."/>
            <person name="Raphael J."/>
            <person name="Moreira D."/>
            <person name="Kelley T."/>
            <person name="LaBaer J."/>
            <person name="Lin Y."/>
            <person name="Phelan M."/>
            <person name="Farmer A."/>
        </authorList>
    </citation>
    <scope>NUCLEOTIDE SEQUENCE [LARGE SCALE MRNA] (ISOFORM 1)</scope>
</reference>
<reference key="6">
    <citation type="submission" date="2005-04" db="EMBL/GenBank/DDBJ databases">
        <authorList>
            <person name="Suzuki Y."/>
            <person name="Sugano S."/>
            <person name="Totoki Y."/>
            <person name="Toyoda A."/>
            <person name="Takeda T."/>
            <person name="Sakaki Y."/>
            <person name="Tanaka A."/>
            <person name="Yokoyama S."/>
        </authorList>
    </citation>
    <scope>NUCLEOTIDE SEQUENCE [LARGE SCALE MRNA] (ISOFORM 1)</scope>
    <scope>VARIANT LEU-357</scope>
    <source>
        <tissue>Liver</tissue>
    </source>
</reference>
<reference key="7">
    <citation type="journal article" date="2004" name="Nature">
        <title>DNA sequence and analysis of human chromosome 9.</title>
        <authorList>
            <person name="Humphray S.J."/>
            <person name="Oliver K."/>
            <person name="Hunt A.R."/>
            <person name="Plumb R.W."/>
            <person name="Loveland J.E."/>
            <person name="Howe K.L."/>
            <person name="Andrews T.D."/>
            <person name="Searle S."/>
            <person name="Hunt S.E."/>
            <person name="Scott C.E."/>
            <person name="Jones M.C."/>
            <person name="Ainscough R."/>
            <person name="Almeida J.P."/>
            <person name="Ambrose K.D."/>
            <person name="Ashwell R.I.S."/>
            <person name="Babbage A.K."/>
            <person name="Babbage S."/>
            <person name="Bagguley C.L."/>
            <person name="Bailey J."/>
            <person name="Banerjee R."/>
            <person name="Barker D.J."/>
            <person name="Barlow K.F."/>
            <person name="Bates K."/>
            <person name="Beasley H."/>
            <person name="Beasley O."/>
            <person name="Bird C.P."/>
            <person name="Bray-Allen S."/>
            <person name="Brown A.J."/>
            <person name="Brown J.Y."/>
            <person name="Burford D."/>
            <person name="Burrill W."/>
            <person name="Burton J."/>
            <person name="Carder C."/>
            <person name="Carter N.P."/>
            <person name="Chapman J.C."/>
            <person name="Chen Y."/>
            <person name="Clarke G."/>
            <person name="Clark S.Y."/>
            <person name="Clee C.M."/>
            <person name="Clegg S."/>
            <person name="Collier R.E."/>
            <person name="Corby N."/>
            <person name="Crosier M."/>
            <person name="Cummings A.T."/>
            <person name="Davies J."/>
            <person name="Dhami P."/>
            <person name="Dunn M."/>
            <person name="Dutta I."/>
            <person name="Dyer L.W."/>
            <person name="Earthrowl M.E."/>
            <person name="Faulkner L."/>
            <person name="Fleming C.J."/>
            <person name="Frankish A."/>
            <person name="Frankland J.A."/>
            <person name="French L."/>
            <person name="Fricker D.G."/>
            <person name="Garner P."/>
            <person name="Garnett J."/>
            <person name="Ghori J."/>
            <person name="Gilbert J.G.R."/>
            <person name="Glison C."/>
            <person name="Grafham D.V."/>
            <person name="Gribble S."/>
            <person name="Griffiths C."/>
            <person name="Griffiths-Jones S."/>
            <person name="Grocock R."/>
            <person name="Guy J."/>
            <person name="Hall R.E."/>
            <person name="Hammond S."/>
            <person name="Harley J.L."/>
            <person name="Harrison E.S.I."/>
            <person name="Hart E.A."/>
            <person name="Heath P.D."/>
            <person name="Henderson C.D."/>
            <person name="Hopkins B.L."/>
            <person name="Howard P.J."/>
            <person name="Howden P.J."/>
            <person name="Huckle E."/>
            <person name="Johnson C."/>
            <person name="Johnson D."/>
            <person name="Joy A.A."/>
            <person name="Kay M."/>
            <person name="Keenan S."/>
            <person name="Kershaw J.K."/>
            <person name="Kimberley A.M."/>
            <person name="King A."/>
            <person name="Knights A."/>
            <person name="Laird G.K."/>
            <person name="Langford C."/>
            <person name="Lawlor S."/>
            <person name="Leongamornlert D.A."/>
            <person name="Leversha M."/>
            <person name="Lloyd C."/>
            <person name="Lloyd D.M."/>
            <person name="Lovell J."/>
            <person name="Martin S."/>
            <person name="Mashreghi-Mohammadi M."/>
            <person name="Matthews L."/>
            <person name="McLaren S."/>
            <person name="McLay K.E."/>
            <person name="McMurray A."/>
            <person name="Milne S."/>
            <person name="Nickerson T."/>
            <person name="Nisbett J."/>
            <person name="Nordsiek G."/>
            <person name="Pearce A.V."/>
            <person name="Peck A.I."/>
            <person name="Porter K.M."/>
            <person name="Pandian R."/>
            <person name="Pelan S."/>
            <person name="Phillimore B."/>
            <person name="Povey S."/>
            <person name="Ramsey Y."/>
            <person name="Rand V."/>
            <person name="Scharfe M."/>
            <person name="Sehra H.K."/>
            <person name="Shownkeen R."/>
            <person name="Sims S.K."/>
            <person name="Skuce C.D."/>
            <person name="Smith M."/>
            <person name="Steward C.A."/>
            <person name="Swarbreck D."/>
            <person name="Sycamore N."/>
            <person name="Tester J."/>
            <person name="Thorpe A."/>
            <person name="Tracey A."/>
            <person name="Tromans A."/>
            <person name="Thomas D.W."/>
            <person name="Wall M."/>
            <person name="Wallis J.M."/>
            <person name="West A.P."/>
            <person name="Whitehead S.L."/>
            <person name="Willey D.L."/>
            <person name="Williams S.A."/>
            <person name="Wilming L."/>
            <person name="Wray P.W."/>
            <person name="Young L."/>
            <person name="Ashurst J.L."/>
            <person name="Coulson A."/>
            <person name="Blocker H."/>
            <person name="Durbin R.M."/>
            <person name="Sulston J.E."/>
            <person name="Hubbard T."/>
            <person name="Jackson M.J."/>
            <person name="Bentley D.R."/>
            <person name="Beck S."/>
            <person name="Rogers J."/>
            <person name="Dunham I."/>
        </authorList>
    </citation>
    <scope>NUCLEOTIDE SEQUENCE [LARGE SCALE GENOMIC DNA]</scope>
</reference>
<reference key="8">
    <citation type="submission" date="2005-07" db="EMBL/GenBank/DDBJ databases">
        <authorList>
            <person name="Mural R.J."/>
            <person name="Istrail S."/>
            <person name="Sutton G.G."/>
            <person name="Florea L."/>
            <person name="Halpern A.L."/>
            <person name="Mobarry C.M."/>
            <person name="Lippert R."/>
            <person name="Walenz B."/>
            <person name="Shatkay H."/>
            <person name="Dew I."/>
            <person name="Miller J.R."/>
            <person name="Flanigan M.J."/>
            <person name="Edwards N.J."/>
            <person name="Bolanos R."/>
            <person name="Fasulo D."/>
            <person name="Halldorsson B.V."/>
            <person name="Hannenhalli S."/>
            <person name="Turner R."/>
            <person name="Yooseph S."/>
            <person name="Lu F."/>
            <person name="Nusskern D.R."/>
            <person name="Shue B.C."/>
            <person name="Zheng X.H."/>
            <person name="Zhong F."/>
            <person name="Delcher A.L."/>
            <person name="Huson D.H."/>
            <person name="Kravitz S.A."/>
            <person name="Mouchard L."/>
            <person name="Reinert K."/>
            <person name="Remington K.A."/>
            <person name="Clark A.G."/>
            <person name="Waterman M.S."/>
            <person name="Eichler E.E."/>
            <person name="Adams M.D."/>
            <person name="Hunkapiller M.W."/>
            <person name="Myers E.W."/>
            <person name="Venter J.C."/>
        </authorList>
    </citation>
    <scope>NUCLEOTIDE SEQUENCE [LARGE SCALE GENOMIC DNA]</scope>
</reference>
<reference key="9">
    <citation type="journal article" date="2004" name="Genome Res.">
        <title>The status, quality, and expansion of the NIH full-length cDNA project: the Mammalian Gene Collection (MGC).</title>
        <authorList>
            <consortium name="The MGC Project Team"/>
        </authorList>
    </citation>
    <scope>NUCLEOTIDE SEQUENCE [LARGE SCALE MRNA] (ISOFORM 1)</scope>
    <source>
        <tissue>Placenta</tissue>
    </source>
</reference>
<reference key="10">
    <citation type="journal article" date="2007" name="Apoptosis">
        <title>Overexpression of the cis/trans isomerase PTPA triggers caspase 3-dependent apoptosis.</title>
        <authorList>
            <person name="Azam S."/>
            <person name="Drobetsky E."/>
            <person name="Ramotar D."/>
        </authorList>
    </citation>
    <scope>FUNCTION IN APOPTOSIS</scope>
    <scope>SUBCELLULAR LOCATION</scope>
</reference>
<reference key="11">
    <citation type="journal article" date="2009" name="Anal. Chem.">
        <title>Lys-N and trypsin cover complementary parts of the phosphoproteome in a refined SCX-based approach.</title>
        <authorList>
            <person name="Gauci S."/>
            <person name="Helbig A.O."/>
            <person name="Slijper M."/>
            <person name="Krijgsveld J."/>
            <person name="Heck A.J."/>
            <person name="Mohammed S."/>
        </authorList>
    </citation>
    <scope>ACETYLATION [LARGE SCALE ANALYSIS] AT ALA-2</scope>
    <scope>CLEAVAGE OF INITIATOR METHIONINE [LARGE SCALE ANALYSIS]</scope>
    <scope>IDENTIFICATION BY MASS SPECTROMETRY [LARGE SCALE ANALYSIS]</scope>
</reference>
<reference key="12">
    <citation type="journal article" date="2009" name="Science">
        <title>Lysine acetylation targets protein complexes and co-regulates major cellular functions.</title>
        <authorList>
            <person name="Choudhary C."/>
            <person name="Kumar C."/>
            <person name="Gnad F."/>
            <person name="Nielsen M.L."/>
            <person name="Rehman M."/>
            <person name="Walther T.C."/>
            <person name="Olsen J.V."/>
            <person name="Mann M."/>
        </authorList>
    </citation>
    <scope>IDENTIFICATION BY MASS SPECTROMETRY [LARGE SCALE ANALYSIS]</scope>
</reference>
<reference key="13">
    <citation type="journal article" date="2011" name="BMC Syst. Biol.">
        <title>Initial characterization of the human central proteome.</title>
        <authorList>
            <person name="Burkard T.R."/>
            <person name="Planyavsky M."/>
            <person name="Kaupe I."/>
            <person name="Breitwieser F.P."/>
            <person name="Buerckstuemmer T."/>
            <person name="Bennett K.L."/>
            <person name="Superti-Furga G."/>
            <person name="Colinge J."/>
        </authorList>
    </citation>
    <scope>IDENTIFICATION BY MASS SPECTROMETRY [LARGE SCALE ANALYSIS]</scope>
</reference>
<reference evidence="16" key="14">
    <citation type="journal article" date="2006" name="J. Biol. Chem.">
        <title>The crystal structure of a human PP2A phosphatase activator reveals a novel fold and highly conserved cleft implicated in protein-protein interactions.</title>
        <authorList>
            <person name="Magnusdottir A."/>
            <person name="Stenmark P."/>
            <person name="Flodin S."/>
            <person name="Nyman T."/>
            <person name="Hammarstroem M."/>
            <person name="Ehn M."/>
            <person name="Bakali H.M.A."/>
            <person name="Berglund H."/>
            <person name="Nordlund P."/>
        </authorList>
    </citation>
    <scope>X-RAY CRYSTALLOGRAPHY (1.6 ANGSTROMS) OF 22-358</scope>
</reference>
<reference evidence="19" key="15">
    <citation type="journal article" date="2006" name="Mol. Cell">
        <title>Crystal structure of the PP2A phosphatase activator: implications for its PP2A-specific PPIase activity.</title>
        <authorList>
            <person name="Leulliot N."/>
            <person name="Vicentini G."/>
            <person name="Jordens J."/>
            <person name="Quevillon-Cheruel S."/>
            <person name="Schiltz M."/>
            <person name="Barford D."/>
            <person name="van Tilbeurgh H."/>
            <person name="Goris J."/>
        </authorList>
    </citation>
    <scope>X-RAY CRYSTALLOGRAPHY (1.5 ANGSTROMS) OF 20-357</scope>
</reference>
<reference evidence="17 18" key="16">
    <citation type="journal article" date="2006" name="Mol. Cell">
        <title>Structure and mechanism of the phosphotyrosyl phosphatase activator.</title>
        <authorList>
            <person name="Chao Y."/>
            <person name="Xing Y."/>
            <person name="Chen Y."/>
            <person name="Xu Y."/>
            <person name="Lin Z."/>
            <person name="Li Z."/>
            <person name="Jeffrey P.D."/>
            <person name="Stock J.B."/>
            <person name="Shi Y."/>
        </authorList>
    </citation>
    <scope>X-RAY CRYSTALLOGRAPHY (1.9 ANGSTROMS) IN COMPLEX WITH ATP AND MG(2+)</scope>
    <scope>FUNCTION IN MODULATION OF PP2A SUBSTRATE SPECIFICITY</scope>
    <scope>ATP-BINDING</scope>
    <scope>MUTAGENESIS OF ASP-185; ALA-239; GLY-240; VAL-244; GLU-305; VAL-316; GLY-325; MET-329 AND LYS-337</scope>
    <scope>INTERACTION WITH THE PP2A(D) COMPLEX</scope>
</reference>
<reference evidence="20" key="17">
    <citation type="journal article" date="2014" name="Biol. Chem.">
        <title>Structural basis for PTPA interaction with the invariant C-terminal tail of PP2A.</title>
        <authorList>
            <person name="Low C."/>
            <person name="Quistgaard E.M."/>
            <person name="Kovermann M."/>
            <person name="Anandapadamanaban M."/>
            <person name="Balbach J."/>
            <person name="Nordlund P."/>
        </authorList>
    </citation>
    <scope>X-RAY CRYSTALLOGRAPHY (1.80 ANGSTROMS) OF 22-358 IN COMPLEX WITH PPP2CA 304-309</scope>
    <scope>INTERACTION WITH PPP2CA</scope>
</reference>
<reference key="18">
    <citation type="journal article" date="2023" name="Brain">
        <title>PTPA variants and impaired PP2A activity in early-onset parkinsonism with intellectual disability.</title>
        <authorList>
            <consortium name="French and Mediterranean Parkinson disease Genetics Study Group"/>
            <consortium name="International Parkinsonism Genetics Network"/>
            <person name="Fevga C."/>
            <person name="Tesson C."/>
            <person name="Carreras Mascaro A."/>
            <person name="Courtin T."/>
            <person name="van Coller R."/>
            <person name="Sakka S."/>
            <person name="Ferraro F."/>
            <person name="Farhat N."/>
            <person name="Bardien S."/>
            <person name="Damak M."/>
            <person name="Carr J."/>
            <person name="Ferrien M."/>
            <person name="Boumeester V."/>
            <person name="Hundscheid J."/>
            <person name="Grillenzoni N."/>
            <person name="Kessissoglou I.A."/>
            <person name="Kuipers D.J.S."/>
            <person name="Quadri M."/>
            <person name="Corvol J.C."/>
            <person name="Mhiri C."/>
            <person name="Hassan B.A."/>
            <person name="Breedveld G.J."/>
            <person name="Lesage S."/>
            <person name="Mandemakers W."/>
            <person name="Brice A."/>
            <person name="Bonifati V."/>
        </authorList>
    </citation>
    <scope>INVOLVEMENT IN PARK25</scope>
    <scope>VARIANTS PARK25 ASP-171 AND ARG-298</scope>
    <scope>FUNCTION</scope>
</reference>
<sequence>MAEGERQPPPDSSEEAPPATQNFIIPKKEIHTVPDMGKWKRSQAYADYIGFILTLNEGVKGKKLTFEYRVSEMWNEVHEEKEQAAKQSVSCDECIPLPRAGHCAPSEAIEKLVALLNTLDRWIDETPPVDQPSRFGNKAYRTWYAKLDEEAENLVATVVPTHLAAAVPEVAVYLKESVGNSTRIDYGTGHEAAFAAFLCCLCKIGVLRVDDQIAIVFKVFNRYLEVMRKLQKTYRMEPAGSQGVWGLDDFQFLPFIWGSSQLIDHPYLEPRHFVDEKAVNENHKDYMFLECILFITEMKTGPFAEHSNQLWNISAVPSWSKVNQGLIRMYKAECLEKFPVIQHFKFGSLLPIHPVTSG</sequence>
<protein>
    <recommendedName>
        <fullName>Serine/threonine-protein phosphatase 2A activator</fullName>
        <ecNumber evidence="2">5.2.1.8</ecNumber>
    </recommendedName>
    <alternativeName>
        <fullName>PP2A, subunit B', PR53 isoform</fullName>
    </alternativeName>
    <alternativeName>
        <fullName>Phosphotyrosyl phosphatase activator</fullName>
        <shortName>PTPA</shortName>
    </alternativeName>
    <alternativeName>
        <fullName>Serine/threonine-protein phosphatase 2A regulatory subunit 4</fullName>
    </alternativeName>
    <alternativeName>
        <fullName>Serine/threonine-protein phosphatase 2A regulatory subunit B'</fullName>
    </alternativeName>
</protein>
<comment type="function">
    <text evidence="2 4 5 7">PPIases accelerate the folding of proteins. It catalyzes the cis-trans isomerization of proline imidic peptide bonds in oligopeptides (By similarity). Acts as a regulatory subunit for serine/threonine-protein phosphatase 2A (PP2A) (PubMed:16916641, PubMed:36073231). Modulates PP2A activity or substrate specificity, probably by inducing a conformational change in the catalytic subunit, a proposed direct target of the PPIase (PubMed:16916641). Can reactivate inactive phosphatase PP2A-phosphatase methylesterase complexes (PP2A(i)) in presence of ATP and Mg(2+) (By similarity). Reversibly stimulates the variable phosphotyrosyl phosphatase activity of PP2A core heterodimer PP2A(D) in presence of ATP and Mg(2+) (in vitro) (PubMed:16916641). The phosphotyrosyl phosphatase activity is dependent of an ATPase activity of the PP2A(D):PPP2R4 complex (PubMed:16916641). Is involved in apoptosis; the function appears to be independent from PP2A (PubMed:17333320).</text>
</comment>
<comment type="catalytic activity">
    <reaction evidence="2">
        <text>[protein]-peptidylproline (omega=180) = [protein]-peptidylproline (omega=0)</text>
        <dbReference type="Rhea" id="RHEA:16237"/>
        <dbReference type="Rhea" id="RHEA-COMP:10747"/>
        <dbReference type="Rhea" id="RHEA-COMP:10748"/>
        <dbReference type="ChEBI" id="CHEBI:83833"/>
        <dbReference type="ChEBI" id="CHEBI:83834"/>
        <dbReference type="EC" id="5.2.1.8"/>
    </reaction>
</comment>
<comment type="subunit">
    <text evidence="1 4 6">Associates with PP2A heterodimeric core enzyme PP2A(D), composed of a 36 kDa catalytic subunit (subunit C) and a 65 kDa constant regulatory subunit (PR65 or subunit A) (PubMed:16916641). Interacts with the catalytic subunit PPP2CA (via C-terminus) (PubMed:25003389). Interacts with PPP2CB (By similarity).</text>
</comment>
<comment type="interaction">
    <interactant intactId="EBI-1774121">
        <id>Q15257</id>
    </interactant>
    <interactant intactId="EBI-3891843">
        <id>Q4VCS5-2</id>
        <label>AMOT</label>
    </interactant>
    <organismsDiffer>false</organismsDiffer>
    <experiments>3</experiments>
</comment>
<comment type="interaction">
    <interactant intactId="EBI-1774121">
        <id>Q15257</id>
    </interactant>
    <interactant intactId="EBI-1046072">
        <id>P60510</id>
        <label>PPP4C</label>
    </interactant>
    <organismsDiffer>false</organismsDiffer>
    <experiments>2</experiments>
</comment>
<comment type="interaction">
    <interactant intactId="EBI-1774121">
        <id>Q15257</id>
    </interactant>
    <interactant intactId="EBI-1048740">
        <id>Q9NY27</id>
        <label>PPP4R2</label>
    </interactant>
    <organismsDiffer>false</organismsDiffer>
    <experiments>2</experiments>
</comment>
<comment type="interaction">
    <interactant intactId="EBI-12164121">
        <id>Q15257-2</id>
    </interactant>
    <interactant intactId="EBI-308736">
        <id>Q5JTZ9</id>
        <label>AARS2</label>
    </interactant>
    <organismsDiffer>false</organismsDiffer>
    <experiments>3</experiments>
</comment>
<comment type="interaction">
    <interactant intactId="EBI-12164121">
        <id>Q15257-2</id>
    </interactant>
    <interactant intactId="EBI-17286414">
        <id>A2BDD9</id>
        <label>AMOT</label>
    </interactant>
    <organismsDiffer>false</organismsDiffer>
    <experiments>3</experiments>
</comment>
<comment type="interaction">
    <interactant intactId="EBI-12164121">
        <id>Q15257-2</id>
    </interactant>
    <interactant intactId="EBI-11977221">
        <id>Q86Z20</id>
        <label>CCDC125</label>
    </interactant>
    <organismsDiffer>false</organismsDiffer>
    <experiments>3</experiments>
</comment>
<comment type="interaction">
    <interactant intactId="EBI-12164121">
        <id>Q15257-2</id>
    </interactant>
    <interactant intactId="EBI-740897">
        <id>Q9GZT8</id>
        <label>NIF3L1</label>
    </interactant>
    <organismsDiffer>false</organismsDiffer>
    <experiments>3</experiments>
</comment>
<comment type="interaction">
    <interactant intactId="EBI-12164121">
        <id>Q15257-2</id>
    </interactant>
    <interactant intactId="EBI-302388">
        <id>P30153</id>
        <label>PPP2R1A</label>
    </interactant>
    <organismsDiffer>false</organismsDiffer>
    <experiments>3</experiments>
</comment>
<comment type="interaction">
    <interactant intactId="EBI-12164121">
        <id>Q15257-2</id>
    </interactant>
    <interactant intactId="EBI-742688">
        <id>Q9NZD8</id>
        <label>SPG21</label>
    </interactant>
    <organismsDiffer>false</organismsDiffer>
    <experiments>5</experiments>
</comment>
<comment type="subcellular location">
    <subcellularLocation>
        <location evidence="5">Cytoplasm</location>
    </subcellularLocation>
    <subcellularLocation>
        <location evidence="5">Nucleus</location>
    </subcellularLocation>
</comment>
<comment type="alternative products">
    <event type="alternative splicing"/>
    <isoform>
        <id>Q15257-1</id>
        <name>2</name>
        <name>Beta</name>
        <sequence type="displayed"/>
    </isoform>
    <isoform>
        <id>Q15257-2</id>
        <name>1</name>
        <name>Alpha</name>
        <sequence type="described" ref="VSP_005123"/>
    </isoform>
    <isoform>
        <id>Q15257-3</id>
        <name>3</name>
        <name>Delta</name>
        <sequence type="described" ref="VSP_005122"/>
    </isoform>
    <isoform>
        <id>Q15257-4</id>
        <name>4</name>
        <name>Epsilon</name>
        <sequence type="described" ref="VSP_005124"/>
    </isoform>
</comment>
<comment type="tissue specificity">
    <text>Widely expressed.</text>
</comment>
<comment type="disease" evidence="7">
    <disease id="DI-06748">
        <name>Parkinson disease 25, autosomal recessive early-onset, with impaired intellectual development</name>
        <acronym>PARK25</acronym>
        <description>An autosomal recessive, early-onset form of Parkinson disease, a complex neurodegenerative disorder characterized by bradykinesia, resting tremor, muscular rigidity and postural instability, as well as by a clinically significant response to treatment with levodopa. The pathology involves the loss of dopaminergic neurons in the substantia nigra and the presence of Lewy bodies (intraneuronal accumulations of aggregated proteins), in surviving neurons in various areas of the brain. PARK25 is characterized by onset of parkinsonism in late childhood or adolescence, developmental delay and intellectual disability. Cognitive impairment is mild to moderate and non-progressive.</description>
        <dbReference type="MIM" id="620482"/>
    </disease>
    <text>The disease is caused by variants affecting the gene represented in this entry.</text>
</comment>
<comment type="similarity">
    <text evidence="14">Belongs to the PTPA-type PPIase family.</text>
</comment>
<comment type="online information" name="Atlas of Genetics and Cytogenetics in Oncology and Haematology">
    <link uri="https://atlasgeneticsoncology.org/gene/41817/PPP2R4"/>
</comment>